<dbReference type="EMBL" id="BC052921">
    <property type="protein sequence ID" value="AAH52921.1"/>
    <property type="molecule type" value="mRNA"/>
</dbReference>
<dbReference type="CCDS" id="CCDS17217.1"/>
<dbReference type="RefSeq" id="NP_766264.2">
    <property type="nucleotide sequence ID" value="NM_172676.2"/>
</dbReference>
<dbReference type="SMR" id="Q7TST3"/>
<dbReference type="FunCoup" id="Q7TST3">
    <property type="interactions" value="170"/>
</dbReference>
<dbReference type="STRING" id="10090.ENSMUSP00000060499"/>
<dbReference type="iPTMnet" id="Q7TST3"/>
<dbReference type="PhosphoSitePlus" id="Q7TST3"/>
<dbReference type="PaxDb" id="10090-ENSMUSP00000060499"/>
<dbReference type="ProteomicsDB" id="256694"/>
<dbReference type="Antibodypedia" id="48062">
    <property type="antibodies" value="24 antibodies from 12 providers"/>
</dbReference>
<dbReference type="Ensembl" id="ENSMUST00000060173.9">
    <property type="protein sequence ID" value="ENSMUSP00000060499.9"/>
    <property type="gene ID" value="ENSMUSG00000038605.12"/>
</dbReference>
<dbReference type="GeneID" id="229011"/>
<dbReference type="KEGG" id="mmu:229011"/>
<dbReference type="UCSC" id="uc008omw.2">
    <property type="organism name" value="mouse"/>
</dbReference>
<dbReference type="AGR" id="MGI:2443872"/>
<dbReference type="CTD" id="140700"/>
<dbReference type="MGI" id="MGI:2443872">
    <property type="gene designation" value="Samd10"/>
</dbReference>
<dbReference type="VEuPathDB" id="HostDB:ENSMUSG00000038605"/>
<dbReference type="eggNOG" id="ENOG502QWNA">
    <property type="taxonomic scope" value="Eukaryota"/>
</dbReference>
<dbReference type="GeneTree" id="ENSGT00390000008161"/>
<dbReference type="HOGENOM" id="CLU_105476_1_0_1"/>
<dbReference type="InParanoid" id="Q7TST3"/>
<dbReference type="OMA" id="HCGLYHT"/>
<dbReference type="OrthoDB" id="434324at2759"/>
<dbReference type="PhylomeDB" id="Q7TST3"/>
<dbReference type="TreeFam" id="TF325918"/>
<dbReference type="BioGRID-ORCS" id="229011">
    <property type="hits" value="4 hits in 78 CRISPR screens"/>
</dbReference>
<dbReference type="ChiTaRS" id="Samd10">
    <property type="organism name" value="mouse"/>
</dbReference>
<dbReference type="PRO" id="PR:Q7TST3"/>
<dbReference type="Proteomes" id="UP000000589">
    <property type="component" value="Chromosome 2"/>
</dbReference>
<dbReference type="RNAct" id="Q7TST3">
    <property type="molecule type" value="protein"/>
</dbReference>
<dbReference type="Bgee" id="ENSMUSG00000038605">
    <property type="expression patterns" value="Expressed in entorhinal cortex and 230 other cell types or tissues"/>
</dbReference>
<dbReference type="ExpressionAtlas" id="Q7TST3">
    <property type="expression patterns" value="baseline and differential"/>
</dbReference>
<dbReference type="CDD" id="cd09510">
    <property type="entry name" value="SAM_aveugle-like"/>
    <property type="match status" value="1"/>
</dbReference>
<dbReference type="Gene3D" id="1.10.150.50">
    <property type="entry name" value="Transcription Factor, Ets-1"/>
    <property type="match status" value="1"/>
</dbReference>
<dbReference type="InterPro" id="IPR039144">
    <property type="entry name" value="Aveugle-like_SAM_dom"/>
</dbReference>
<dbReference type="InterPro" id="IPR001660">
    <property type="entry name" value="SAM"/>
</dbReference>
<dbReference type="InterPro" id="IPR013761">
    <property type="entry name" value="SAM/pointed_sf"/>
</dbReference>
<dbReference type="InterPro" id="IPR052268">
    <property type="entry name" value="SAM_domain-containing_protein"/>
</dbReference>
<dbReference type="PANTHER" id="PTHR20843">
    <property type="entry name" value="STERILE ALPHA MOTIF DOMAIN CONTAINING PROTEIN 10"/>
    <property type="match status" value="1"/>
</dbReference>
<dbReference type="PANTHER" id="PTHR20843:SF1">
    <property type="entry name" value="STERILE ALPHA MOTIF DOMAIN-CONTAINING PROTEIN 10"/>
    <property type="match status" value="1"/>
</dbReference>
<dbReference type="Pfam" id="PF07647">
    <property type="entry name" value="SAM_2"/>
    <property type="match status" value="1"/>
</dbReference>
<dbReference type="SMART" id="SM00454">
    <property type="entry name" value="SAM"/>
    <property type="match status" value="1"/>
</dbReference>
<dbReference type="SUPFAM" id="SSF47769">
    <property type="entry name" value="SAM/Pointed domain"/>
    <property type="match status" value="1"/>
</dbReference>
<dbReference type="PROSITE" id="PS50105">
    <property type="entry name" value="SAM_DOMAIN"/>
    <property type="match status" value="1"/>
</dbReference>
<keyword id="KW-1185">Reference proteome</keyword>
<gene>
    <name evidence="5" type="primary">Samd10</name>
</gene>
<protein>
    <recommendedName>
        <fullName>Sterile alpha motif domain-containing protein 10</fullName>
        <shortName>SAM domain-containing protein 10</shortName>
    </recommendedName>
</protein>
<organism>
    <name type="scientific">Mus musculus</name>
    <name type="common">Mouse</name>
    <dbReference type="NCBI Taxonomy" id="10090"/>
    <lineage>
        <taxon>Eukaryota</taxon>
        <taxon>Metazoa</taxon>
        <taxon>Chordata</taxon>
        <taxon>Craniata</taxon>
        <taxon>Vertebrata</taxon>
        <taxon>Euteleostomi</taxon>
        <taxon>Mammalia</taxon>
        <taxon>Eutheria</taxon>
        <taxon>Euarchontoglires</taxon>
        <taxon>Glires</taxon>
        <taxon>Rodentia</taxon>
        <taxon>Myomorpha</taxon>
        <taxon>Muroidea</taxon>
        <taxon>Muridae</taxon>
        <taxon>Murinae</taxon>
        <taxon>Mus</taxon>
        <taxon>Mus</taxon>
    </lineage>
</organism>
<evidence type="ECO:0000255" key="1">
    <source>
        <dbReference type="PROSITE-ProRule" id="PRU00184"/>
    </source>
</evidence>
<evidence type="ECO:0000256" key="2">
    <source>
        <dbReference type="SAM" id="MobiDB-lite"/>
    </source>
</evidence>
<evidence type="ECO:0000305" key="3"/>
<evidence type="ECO:0000312" key="4">
    <source>
        <dbReference type="EMBL" id="AAH52921.1"/>
    </source>
</evidence>
<evidence type="ECO:0000312" key="5">
    <source>
        <dbReference type="MGI" id="MGI:2443872"/>
    </source>
</evidence>
<reference evidence="3 4" key="1">
    <citation type="journal article" date="2004" name="Genome Res.">
        <title>The status, quality, and expansion of the NIH full-length cDNA project: the Mammalian Gene Collection (MGC).</title>
        <authorList>
            <consortium name="The MGC Project Team"/>
        </authorList>
    </citation>
    <scope>NUCLEOTIDE SEQUENCE [LARGE SCALE MRNA]</scope>
    <source>
        <tissue evidence="4">Olfactory epithelium</tissue>
    </source>
</reference>
<proteinExistence type="evidence at transcript level"/>
<accession>Q7TST3</accession>
<feature type="chain" id="PRO_0000097569" description="Sterile alpha motif domain-containing protein 10">
    <location>
        <begin position="1"/>
        <end position="202"/>
    </location>
</feature>
<feature type="domain" description="SAM" evidence="1">
    <location>
        <begin position="118"/>
        <end position="184"/>
    </location>
</feature>
<feature type="region of interest" description="Disordered" evidence="2">
    <location>
        <begin position="1"/>
        <end position="22"/>
    </location>
</feature>
<sequence>MFTELRSKLSPPRARAGAVRPGFGERPDVDASAHFSFCQTLLEHTVSAENIPCHLPRTPGTSLTWHDSRSQRASSSRPIKLLQQPGSEIPQARLYSDHYGLYHTSPSLGGLTRPVVLWSQQDVCKWLKKHCPHNYLVYVEAFSQHAITGRALLRLNADKLQRMGLTQEAQRQEVLQQVLHLQVREEGRSLKLLSQASFGNMS</sequence>
<name>SAM10_MOUSE</name>